<reference key="1">
    <citation type="submission" date="2005-10" db="EMBL/GenBank/DDBJ databases">
        <title>Complete sequence of Pelobacter carbinolicus DSM 2380.</title>
        <authorList>
            <person name="Copeland A."/>
            <person name="Lucas S."/>
            <person name="Lapidus A."/>
            <person name="Barry K."/>
            <person name="Detter J.C."/>
            <person name="Glavina T."/>
            <person name="Hammon N."/>
            <person name="Israni S."/>
            <person name="Pitluck S."/>
            <person name="Chertkov O."/>
            <person name="Schmutz J."/>
            <person name="Larimer F."/>
            <person name="Land M."/>
            <person name="Kyrpides N."/>
            <person name="Ivanova N."/>
            <person name="Richardson P."/>
        </authorList>
    </citation>
    <scope>NUCLEOTIDE SEQUENCE [LARGE SCALE GENOMIC DNA]</scope>
    <source>
        <strain>DSM 2380 / NBRC 103641 / GraBd1</strain>
    </source>
</reference>
<sequence length="250" mass="26865">MLILVTNDDGVHAPGIAALADSLHGLGQVVVVAPDRDRSAIGHALTLHAPLRADELRPGVFAVDGTPTDCVNLGIHGLLSSVPDLVVAGINRGANLGDDITYSGTVCAAMEATLMGVPALAVSLEGDTFASSEYRQAADAALFLAQKVSEEGLPSDTFLNVNVPAGRIRGIRLTRQGRRRYGDMVVEKMDPRGRKYYWLGAGECDFDYVDGTDCHAMHEGFISVTPLHLDLTNFRSFECLSRWSMTYSMD</sequence>
<comment type="function">
    <text evidence="1">Nucleotidase that shows phosphatase activity on nucleoside 5'-monophosphates.</text>
</comment>
<comment type="catalytic activity">
    <reaction evidence="1">
        <text>a ribonucleoside 5'-phosphate + H2O = a ribonucleoside + phosphate</text>
        <dbReference type="Rhea" id="RHEA:12484"/>
        <dbReference type="ChEBI" id="CHEBI:15377"/>
        <dbReference type="ChEBI" id="CHEBI:18254"/>
        <dbReference type="ChEBI" id="CHEBI:43474"/>
        <dbReference type="ChEBI" id="CHEBI:58043"/>
        <dbReference type="EC" id="3.1.3.5"/>
    </reaction>
</comment>
<comment type="cofactor">
    <cofactor evidence="1">
        <name>a divalent metal cation</name>
        <dbReference type="ChEBI" id="CHEBI:60240"/>
    </cofactor>
    <text evidence="1">Binds 1 divalent metal cation per subunit.</text>
</comment>
<comment type="subcellular location">
    <subcellularLocation>
        <location evidence="1">Cytoplasm</location>
    </subcellularLocation>
</comment>
<comment type="similarity">
    <text evidence="1">Belongs to the SurE nucleotidase family.</text>
</comment>
<gene>
    <name evidence="1" type="primary">surE</name>
    <name type="ordered locus">Pcar_1426</name>
</gene>
<evidence type="ECO:0000255" key="1">
    <source>
        <dbReference type="HAMAP-Rule" id="MF_00060"/>
    </source>
</evidence>
<dbReference type="EC" id="3.1.3.5" evidence="1"/>
<dbReference type="EMBL" id="CP000142">
    <property type="protein sequence ID" value="ABA88672.1"/>
    <property type="molecule type" value="Genomic_DNA"/>
</dbReference>
<dbReference type="RefSeq" id="WP_011341155.1">
    <property type="nucleotide sequence ID" value="NC_007498.2"/>
</dbReference>
<dbReference type="SMR" id="Q3A4N5"/>
<dbReference type="STRING" id="338963.Pcar_1426"/>
<dbReference type="KEGG" id="pca:Pcar_1426"/>
<dbReference type="eggNOG" id="COG0496">
    <property type="taxonomic scope" value="Bacteria"/>
</dbReference>
<dbReference type="HOGENOM" id="CLU_045192_1_2_7"/>
<dbReference type="OrthoDB" id="9780815at2"/>
<dbReference type="Proteomes" id="UP000002534">
    <property type="component" value="Chromosome"/>
</dbReference>
<dbReference type="GO" id="GO:0005737">
    <property type="term" value="C:cytoplasm"/>
    <property type="evidence" value="ECO:0007669"/>
    <property type="project" value="UniProtKB-SubCell"/>
</dbReference>
<dbReference type="GO" id="GO:0008254">
    <property type="term" value="F:3'-nucleotidase activity"/>
    <property type="evidence" value="ECO:0007669"/>
    <property type="project" value="TreeGrafter"/>
</dbReference>
<dbReference type="GO" id="GO:0008253">
    <property type="term" value="F:5'-nucleotidase activity"/>
    <property type="evidence" value="ECO:0007669"/>
    <property type="project" value="UniProtKB-UniRule"/>
</dbReference>
<dbReference type="GO" id="GO:0004309">
    <property type="term" value="F:exopolyphosphatase activity"/>
    <property type="evidence" value="ECO:0007669"/>
    <property type="project" value="TreeGrafter"/>
</dbReference>
<dbReference type="GO" id="GO:0046872">
    <property type="term" value="F:metal ion binding"/>
    <property type="evidence" value="ECO:0007669"/>
    <property type="project" value="UniProtKB-UniRule"/>
</dbReference>
<dbReference type="GO" id="GO:0000166">
    <property type="term" value="F:nucleotide binding"/>
    <property type="evidence" value="ECO:0007669"/>
    <property type="project" value="UniProtKB-KW"/>
</dbReference>
<dbReference type="FunFam" id="3.40.1210.10:FF:000001">
    <property type="entry name" value="5'/3'-nucleotidase SurE"/>
    <property type="match status" value="1"/>
</dbReference>
<dbReference type="Gene3D" id="3.40.1210.10">
    <property type="entry name" value="Survival protein SurE-like phosphatase/nucleotidase"/>
    <property type="match status" value="1"/>
</dbReference>
<dbReference type="HAMAP" id="MF_00060">
    <property type="entry name" value="SurE"/>
    <property type="match status" value="1"/>
</dbReference>
<dbReference type="InterPro" id="IPR030048">
    <property type="entry name" value="SurE"/>
</dbReference>
<dbReference type="InterPro" id="IPR002828">
    <property type="entry name" value="SurE-like_Pase/nucleotidase"/>
</dbReference>
<dbReference type="InterPro" id="IPR036523">
    <property type="entry name" value="SurE-like_sf"/>
</dbReference>
<dbReference type="NCBIfam" id="NF001490">
    <property type="entry name" value="PRK00346.1-4"/>
    <property type="match status" value="1"/>
</dbReference>
<dbReference type="NCBIfam" id="TIGR00087">
    <property type="entry name" value="surE"/>
    <property type="match status" value="1"/>
</dbReference>
<dbReference type="PANTHER" id="PTHR30457">
    <property type="entry name" value="5'-NUCLEOTIDASE SURE"/>
    <property type="match status" value="1"/>
</dbReference>
<dbReference type="PANTHER" id="PTHR30457:SF12">
    <property type="entry name" value="5'_3'-NUCLEOTIDASE SURE"/>
    <property type="match status" value="1"/>
</dbReference>
<dbReference type="Pfam" id="PF01975">
    <property type="entry name" value="SurE"/>
    <property type="match status" value="1"/>
</dbReference>
<dbReference type="SUPFAM" id="SSF64167">
    <property type="entry name" value="SurE-like"/>
    <property type="match status" value="1"/>
</dbReference>
<organism>
    <name type="scientific">Syntrophotalea carbinolica (strain DSM 2380 / NBRC 103641 / GraBd1)</name>
    <name type="common">Pelobacter carbinolicus</name>
    <dbReference type="NCBI Taxonomy" id="338963"/>
    <lineage>
        <taxon>Bacteria</taxon>
        <taxon>Pseudomonadati</taxon>
        <taxon>Thermodesulfobacteriota</taxon>
        <taxon>Desulfuromonadia</taxon>
        <taxon>Desulfuromonadales</taxon>
        <taxon>Syntrophotaleaceae</taxon>
        <taxon>Syntrophotalea</taxon>
    </lineage>
</organism>
<accession>Q3A4N5</accession>
<protein>
    <recommendedName>
        <fullName evidence="1">5'-nucleotidase SurE</fullName>
        <ecNumber evidence="1">3.1.3.5</ecNumber>
    </recommendedName>
    <alternativeName>
        <fullName evidence="1">Nucleoside 5'-monophosphate phosphohydrolase</fullName>
    </alternativeName>
</protein>
<feature type="chain" id="PRO_0000235632" description="5'-nucleotidase SurE">
    <location>
        <begin position="1"/>
        <end position="250"/>
    </location>
</feature>
<feature type="binding site" evidence="1">
    <location>
        <position position="8"/>
    </location>
    <ligand>
        <name>a divalent metal cation</name>
        <dbReference type="ChEBI" id="CHEBI:60240"/>
    </ligand>
</feature>
<feature type="binding site" evidence="1">
    <location>
        <position position="9"/>
    </location>
    <ligand>
        <name>a divalent metal cation</name>
        <dbReference type="ChEBI" id="CHEBI:60240"/>
    </ligand>
</feature>
<feature type="binding site" evidence="1">
    <location>
        <position position="39"/>
    </location>
    <ligand>
        <name>a divalent metal cation</name>
        <dbReference type="ChEBI" id="CHEBI:60240"/>
    </ligand>
</feature>
<feature type="binding site" evidence="1">
    <location>
        <position position="91"/>
    </location>
    <ligand>
        <name>a divalent metal cation</name>
        <dbReference type="ChEBI" id="CHEBI:60240"/>
    </ligand>
</feature>
<keyword id="KW-0963">Cytoplasm</keyword>
<keyword id="KW-0378">Hydrolase</keyword>
<keyword id="KW-0479">Metal-binding</keyword>
<keyword id="KW-0547">Nucleotide-binding</keyword>
<keyword id="KW-1185">Reference proteome</keyword>
<proteinExistence type="inferred from homology"/>
<name>SURE_SYNC1</name>